<sequence length="597" mass="68901">MNKAFIVVAVVLLILGIISFNLVFIILAIISLFFVDPQIMRKFYKFFLKSNISKIFVKNYKTNHSIVIEDGYLKIEDNVKAFLIVDDIPFDYRDLSDESLRVKISSFHKVLDIAGQIDIVFRKSSIDKNKFLSDLFQKAQNIRVIIDADPSNERAKNELMMIQHMIKKISEGEMPFKYLIFFIINSDSKEKALATADVVKKGLESIGVKSRLAYKHEIEDLLNDKLSLKKIVFPSQIPFLSVFSLQKQPDYEIITDGIYLGQEINDRRAVFWNVNRVINPHALIIGPTGSGKTEFLLSLGVKTNILYGIPIVFFDVKKDISLRLKKYGYKYKYINPLLNSINLLKFSNVNKDIYLIQLENIIRNSFKLDRFVSALLYRILLESISDNYYEVSWDYIIDKIEKYDINEDVKAYLLRIVSAIKSLDAGVEDIDLISAISEGINVVDLSSIKSEELRRLVMYGIIIKFINKYNIADDRLKLVLVIDEAWTLLRSEDRDYQIVADLIKRGRGFGIGIFMATQNFDDLGELSDIFLENIGLLGFMNNGDKKFWNEVMRFADLNIEETLRSLIFLGKGEMLIRFINDPRPIMIKTDVLVRNSF</sequence>
<keyword id="KW-0067">ATP-binding</keyword>
<keyword id="KW-1003">Cell membrane</keyword>
<keyword id="KW-0472">Membrane</keyword>
<keyword id="KW-0547">Nucleotide-binding</keyword>
<keyword id="KW-1185">Reference proteome</keyword>
<keyword id="KW-0812">Transmembrane</keyword>
<keyword id="KW-1133">Transmembrane helix</keyword>
<keyword id="KW-0813">Transport</keyword>
<organism>
    <name type="scientific">Sulfolobus acidocaldarius (strain ATCC 33909 / DSM 639 / JCM 8929 / NBRC 15157 / NCIMB 11770)</name>
    <dbReference type="NCBI Taxonomy" id="330779"/>
    <lineage>
        <taxon>Archaea</taxon>
        <taxon>Thermoproteota</taxon>
        <taxon>Thermoprotei</taxon>
        <taxon>Sulfolobales</taxon>
        <taxon>Sulfolobaceae</taxon>
        <taxon>Sulfolobus</taxon>
    </lineage>
</organism>
<reference key="1">
    <citation type="journal article" date="2005" name="J. Bacteriol.">
        <title>The genome of Sulfolobus acidocaldarius, a model organism of the Crenarchaeota.</title>
        <authorList>
            <person name="Chen L."/>
            <person name="Bruegger K."/>
            <person name="Skovgaard M."/>
            <person name="Redder P."/>
            <person name="She Q."/>
            <person name="Torarinsson E."/>
            <person name="Greve B."/>
            <person name="Awayez M."/>
            <person name="Zibat A."/>
            <person name="Klenk H.-P."/>
            <person name="Garrett R.A."/>
        </authorList>
    </citation>
    <scope>NUCLEOTIDE SEQUENCE [LARGE SCALE GENOMIC DNA]</scope>
    <source>
        <strain>ATCC 33909 / DSM 639 / JCM 8929 / NBRC 15157 / NCIMB 11770</strain>
    </source>
</reference>
<reference key="2">
    <citation type="journal article" date="2016" name="Proc. Natl. Acad. Sci. U.S.A.">
        <title>The archaeal Ced system imports DNA.</title>
        <authorList>
            <person name="van Wolferen M."/>
            <person name="Wagner A."/>
            <person name="van der Does C."/>
            <person name="Albers S.V."/>
        </authorList>
    </citation>
    <scope>FUNCTION</scope>
    <scope>SUBCELLULAR LOCATION</scope>
    <scope>INDUCTION</scope>
    <scope>DISRUPTION PHENOTYPE</scope>
    <scope>MUTAGENESIS OF LYS-292</scope>
    <source>
        <strain>JDS22</strain>
        <strain>MW001</strain>
    </source>
</reference>
<accession>Q4JAQ5</accession>
<evidence type="ECO:0000255" key="1"/>
<evidence type="ECO:0000269" key="2">
    <source>
    </source>
</evidence>
<evidence type="ECO:0000303" key="3">
    <source>
    </source>
</evidence>
<evidence type="ECO:0000305" key="4"/>
<evidence type="ECO:0000312" key="5">
    <source>
        <dbReference type="EMBL" id="AAY80124.1"/>
    </source>
</evidence>
<comment type="function">
    <text evidence="2">Part of the Ced system, which is involved in DNA import.</text>
</comment>
<comment type="subcellular location">
    <subcellularLocation>
        <location evidence="2">Cell membrane</location>
        <topology evidence="1">Single-pass membrane protein</topology>
    </subcellularLocation>
</comment>
<comment type="induction">
    <text evidence="2">Up-regulated upon UV stress.</text>
</comment>
<comment type="disruption phenotype">
    <text evidence="2">DNA transfer is completely abolished in deletion mutants. Deletion does not reduce cellular aggregation induced by UV stress.</text>
</comment>
<proteinExistence type="evidence at protein level"/>
<feature type="chain" id="PRO_0000437448" description="DNA import protein CedB">
    <location>
        <begin position="1"/>
        <end position="597"/>
    </location>
</feature>
<feature type="transmembrane region" description="Helical" evidence="1">
    <location>
        <begin position="10"/>
        <end position="30"/>
    </location>
</feature>
<feature type="binding site" evidence="4">
    <location>
        <begin position="286"/>
        <end position="293"/>
    </location>
    <ligand>
        <name>ATP</name>
        <dbReference type="ChEBI" id="CHEBI:30616"/>
    </ligand>
</feature>
<feature type="mutagenesis site" description="Abolishes DNA transfer." evidence="2">
    <original>K</original>
    <variation>A</variation>
    <location>
        <position position="292"/>
    </location>
</feature>
<name>CEDB_SULAC</name>
<gene>
    <name evidence="3" type="primary">cedB</name>
    <name evidence="5" type="ordered locus">Saci_0748</name>
</gene>
<dbReference type="EMBL" id="CP000077">
    <property type="protein sequence ID" value="AAY80124.1"/>
    <property type="molecule type" value="Genomic_DNA"/>
</dbReference>
<dbReference type="RefSeq" id="WP_011277626.1">
    <property type="nucleotide sequence ID" value="NC_007181.1"/>
</dbReference>
<dbReference type="SMR" id="Q4JAQ5"/>
<dbReference type="STRING" id="330779.Saci_0748"/>
<dbReference type="TCDB" id="9.A.53.1.1">
    <property type="family name" value="the crenarchaeal system for exchange of dna (ced) family"/>
</dbReference>
<dbReference type="GeneID" id="14551266"/>
<dbReference type="GeneID" id="78441095"/>
<dbReference type="KEGG" id="sai:Saci_0748"/>
<dbReference type="PATRIC" id="fig|330779.12.peg.717"/>
<dbReference type="eggNOG" id="arCOG05935">
    <property type="taxonomic scope" value="Archaea"/>
</dbReference>
<dbReference type="HOGENOM" id="CLU_516412_0_0_2"/>
<dbReference type="Proteomes" id="UP000001018">
    <property type="component" value="Chromosome"/>
</dbReference>
<dbReference type="GO" id="GO:0005886">
    <property type="term" value="C:plasma membrane"/>
    <property type="evidence" value="ECO:0007669"/>
    <property type="project" value="UniProtKB-SubCell"/>
</dbReference>
<dbReference type="GO" id="GO:0005524">
    <property type="term" value="F:ATP binding"/>
    <property type="evidence" value="ECO:0007669"/>
    <property type="project" value="UniProtKB-KW"/>
</dbReference>
<dbReference type="GO" id="GO:0016887">
    <property type="term" value="F:ATP hydrolysis activity"/>
    <property type="evidence" value="ECO:0007669"/>
    <property type="project" value="InterPro"/>
</dbReference>
<dbReference type="Gene3D" id="3.40.50.300">
    <property type="entry name" value="P-loop containing nucleotide triphosphate hydrolases"/>
    <property type="match status" value="2"/>
</dbReference>
<dbReference type="InterPro" id="IPR003593">
    <property type="entry name" value="AAA+_ATPase"/>
</dbReference>
<dbReference type="InterPro" id="IPR053657">
    <property type="entry name" value="Ced-DNA_import"/>
</dbReference>
<dbReference type="InterPro" id="IPR027417">
    <property type="entry name" value="P-loop_NTPase"/>
</dbReference>
<dbReference type="InterPro" id="IPR051162">
    <property type="entry name" value="T4SS_component"/>
</dbReference>
<dbReference type="NCBIfam" id="NF041017">
    <property type="entry name" value="DNA_import_CedB"/>
    <property type="match status" value="1"/>
</dbReference>
<dbReference type="PANTHER" id="PTHR30121:SF6">
    <property type="entry name" value="SLR6007 PROTEIN"/>
    <property type="match status" value="1"/>
</dbReference>
<dbReference type="PANTHER" id="PTHR30121">
    <property type="entry name" value="UNCHARACTERIZED PROTEIN YJGR-RELATED"/>
    <property type="match status" value="1"/>
</dbReference>
<dbReference type="Pfam" id="PF12846">
    <property type="entry name" value="AAA_10"/>
    <property type="match status" value="1"/>
</dbReference>
<dbReference type="SMART" id="SM00382">
    <property type="entry name" value="AAA"/>
    <property type="match status" value="1"/>
</dbReference>
<dbReference type="SUPFAM" id="SSF52540">
    <property type="entry name" value="P-loop containing nucleoside triphosphate hydrolases"/>
    <property type="match status" value="1"/>
</dbReference>
<protein>
    <recommendedName>
        <fullName evidence="4">DNA import protein CedB</fullName>
    </recommendedName>
    <alternativeName>
        <fullName evidence="3">Crenarchaeal system for exchange of DNA protein B</fullName>
    </alternativeName>
</protein>